<gene>
    <name evidence="1" type="primary">cysI</name>
    <name type="ordered locus">GK1410</name>
</gene>
<accession>Q5L041</accession>
<name>CYSI_GEOKA</name>
<sequence>MAKVELKAPDGPPSDVERIKQESRYLRGTLAETMEDPLSAGIPDDDNRLMKFHGSYLQDDRDVRTERQKQKLEPTYQFMIRVRTPGGVATPEQWLVMDELARKYANGTLKLTTRQAFQLHGVLKWNVKKTMQAINGALMTTLAACGDVNRNVMCNPNPYQSEVHAEVYEWAKLISDHLLPRTRAYYEIWLDDEKVAGTPPVDGEEEPIYGPTYLPRKFKIGIAVPPSNDVDVFSQDIGFIAIVEDGKLAGFNVAIGGGMGMTHGDKTTYPQLAKVIGFCKPDQVVEVAEKIMTVQRDYGNRSSRKHARFKYTIDRLGLEAVKEEIERRLGWRLGEARPYHFEHSGDRYGWVEGVNGTWHFTLFVEGGRVKDYDDYKLMTGLREIAKVHTGDFRLTPNQNLIIANVTSEKKPEIEALIAKYGLTDGRRYTALRRNALACVALPTCGLAMAEAERYLPKLLDKIEEIIDENGLRDEEITIRMTGCPNGCARHVLAEIAFVGKAVGKYNMYLGAAFNGTRLGKLYRENIGEEEILRELRMLLSRYAKERLDGEHFGDFVIRAGIVKEVTDGTNFHD</sequence>
<protein>
    <recommendedName>
        <fullName evidence="1">Sulfite reductase [NADPH] hemoprotein beta-component</fullName>
        <shortName evidence="1">SiR-HP</shortName>
        <shortName evidence="1">SiRHP</shortName>
        <ecNumber evidence="1">1.8.1.2</ecNumber>
    </recommendedName>
</protein>
<keyword id="KW-0004">4Fe-4S</keyword>
<keyword id="KW-0028">Amino-acid biosynthesis</keyword>
<keyword id="KW-0198">Cysteine biosynthesis</keyword>
<keyword id="KW-0349">Heme</keyword>
<keyword id="KW-0408">Iron</keyword>
<keyword id="KW-0411">Iron-sulfur</keyword>
<keyword id="KW-0479">Metal-binding</keyword>
<keyword id="KW-0521">NADP</keyword>
<keyword id="KW-0560">Oxidoreductase</keyword>
<keyword id="KW-1185">Reference proteome</keyword>
<dbReference type="EC" id="1.8.1.2" evidence="1"/>
<dbReference type="EMBL" id="BA000043">
    <property type="protein sequence ID" value="BAD75695.1"/>
    <property type="molecule type" value="Genomic_DNA"/>
</dbReference>
<dbReference type="RefSeq" id="WP_011230906.1">
    <property type="nucleotide sequence ID" value="NC_006510.1"/>
</dbReference>
<dbReference type="SMR" id="Q5L041"/>
<dbReference type="STRING" id="235909.GK1410"/>
<dbReference type="KEGG" id="gka:GK1410"/>
<dbReference type="PATRIC" id="fig|235909.7.peg.1522"/>
<dbReference type="eggNOG" id="COG0155">
    <property type="taxonomic scope" value="Bacteria"/>
</dbReference>
<dbReference type="HOGENOM" id="CLU_001975_3_2_9"/>
<dbReference type="UniPathway" id="UPA00140">
    <property type="reaction ID" value="UER00207"/>
</dbReference>
<dbReference type="Proteomes" id="UP000001172">
    <property type="component" value="Chromosome"/>
</dbReference>
<dbReference type="GO" id="GO:0009337">
    <property type="term" value="C:sulfite reductase complex (NADPH)"/>
    <property type="evidence" value="ECO:0007669"/>
    <property type="project" value="InterPro"/>
</dbReference>
<dbReference type="GO" id="GO:0051539">
    <property type="term" value="F:4 iron, 4 sulfur cluster binding"/>
    <property type="evidence" value="ECO:0007669"/>
    <property type="project" value="UniProtKB-KW"/>
</dbReference>
<dbReference type="GO" id="GO:0020037">
    <property type="term" value="F:heme binding"/>
    <property type="evidence" value="ECO:0007669"/>
    <property type="project" value="InterPro"/>
</dbReference>
<dbReference type="GO" id="GO:0046872">
    <property type="term" value="F:metal ion binding"/>
    <property type="evidence" value="ECO:0007669"/>
    <property type="project" value="UniProtKB-KW"/>
</dbReference>
<dbReference type="GO" id="GO:0050661">
    <property type="term" value="F:NADP binding"/>
    <property type="evidence" value="ECO:0007669"/>
    <property type="project" value="InterPro"/>
</dbReference>
<dbReference type="GO" id="GO:0050311">
    <property type="term" value="F:sulfite reductase (ferredoxin) activity"/>
    <property type="evidence" value="ECO:0007669"/>
    <property type="project" value="TreeGrafter"/>
</dbReference>
<dbReference type="GO" id="GO:0004783">
    <property type="term" value="F:sulfite reductase (NADPH) activity"/>
    <property type="evidence" value="ECO:0007669"/>
    <property type="project" value="UniProtKB-UniRule"/>
</dbReference>
<dbReference type="GO" id="GO:0019344">
    <property type="term" value="P:cysteine biosynthetic process"/>
    <property type="evidence" value="ECO:0007669"/>
    <property type="project" value="UniProtKB-KW"/>
</dbReference>
<dbReference type="GO" id="GO:0070814">
    <property type="term" value="P:hydrogen sulfide biosynthetic process"/>
    <property type="evidence" value="ECO:0007669"/>
    <property type="project" value="UniProtKB-UniRule"/>
</dbReference>
<dbReference type="GO" id="GO:0000103">
    <property type="term" value="P:sulfate assimilation"/>
    <property type="evidence" value="ECO:0007669"/>
    <property type="project" value="UniProtKB-UniRule"/>
</dbReference>
<dbReference type="FunFam" id="3.30.413.10:FF:000003">
    <property type="entry name" value="Sulfite reductase [NADPH] hemoprotein beta-component"/>
    <property type="match status" value="1"/>
</dbReference>
<dbReference type="FunFam" id="3.30.413.10:FF:000004">
    <property type="entry name" value="Sulfite reductase [NADPH] hemoprotein beta-component"/>
    <property type="match status" value="1"/>
</dbReference>
<dbReference type="Gene3D" id="3.30.413.10">
    <property type="entry name" value="Sulfite Reductase Hemoprotein, domain 1"/>
    <property type="match status" value="2"/>
</dbReference>
<dbReference type="HAMAP" id="MF_01540">
    <property type="entry name" value="CysI"/>
    <property type="match status" value="1"/>
</dbReference>
<dbReference type="InterPro" id="IPR011786">
    <property type="entry name" value="CysI"/>
</dbReference>
<dbReference type="InterPro" id="IPR005117">
    <property type="entry name" value="NiRdtase/SiRdtase_haem-b_fer"/>
</dbReference>
<dbReference type="InterPro" id="IPR036136">
    <property type="entry name" value="Nit/Sulf_reduc_fer-like_dom_sf"/>
</dbReference>
<dbReference type="InterPro" id="IPR006067">
    <property type="entry name" value="NO2/SO3_Rdtase_4Fe4S_dom"/>
</dbReference>
<dbReference type="InterPro" id="IPR045169">
    <property type="entry name" value="NO2/SO3_Rdtase_4Fe4S_prot"/>
</dbReference>
<dbReference type="InterPro" id="IPR045854">
    <property type="entry name" value="NO2/SO3_Rdtase_4Fe4S_sf"/>
</dbReference>
<dbReference type="InterPro" id="IPR006066">
    <property type="entry name" value="NO2/SO3_Rdtase_FeS/sirohaem_BS"/>
</dbReference>
<dbReference type="NCBIfam" id="TIGR02041">
    <property type="entry name" value="CysI"/>
    <property type="match status" value="1"/>
</dbReference>
<dbReference type="NCBIfam" id="NF010029">
    <property type="entry name" value="PRK13504.1"/>
    <property type="match status" value="1"/>
</dbReference>
<dbReference type="PANTHER" id="PTHR11493:SF47">
    <property type="entry name" value="SULFITE REDUCTASE [NADPH] SUBUNIT BETA"/>
    <property type="match status" value="1"/>
</dbReference>
<dbReference type="PANTHER" id="PTHR11493">
    <property type="entry name" value="SULFITE REDUCTASE [NADPH] SUBUNIT BETA-RELATED"/>
    <property type="match status" value="1"/>
</dbReference>
<dbReference type="Pfam" id="PF01077">
    <property type="entry name" value="NIR_SIR"/>
    <property type="match status" value="1"/>
</dbReference>
<dbReference type="Pfam" id="PF03460">
    <property type="entry name" value="NIR_SIR_ferr"/>
    <property type="match status" value="2"/>
</dbReference>
<dbReference type="PRINTS" id="PR00397">
    <property type="entry name" value="SIROHAEM"/>
</dbReference>
<dbReference type="SUPFAM" id="SSF56014">
    <property type="entry name" value="Nitrite and sulphite reductase 4Fe-4S domain-like"/>
    <property type="match status" value="2"/>
</dbReference>
<dbReference type="SUPFAM" id="SSF55124">
    <property type="entry name" value="Nitrite/Sulfite reductase N-terminal domain-like"/>
    <property type="match status" value="2"/>
</dbReference>
<dbReference type="PROSITE" id="PS00365">
    <property type="entry name" value="NIR_SIR"/>
    <property type="match status" value="1"/>
</dbReference>
<reference key="1">
    <citation type="journal article" date="2004" name="Nucleic Acids Res.">
        <title>Thermoadaptation trait revealed by the genome sequence of thermophilic Geobacillus kaustophilus.</title>
        <authorList>
            <person name="Takami H."/>
            <person name="Takaki Y."/>
            <person name="Chee G.-J."/>
            <person name="Nishi S."/>
            <person name="Shimamura S."/>
            <person name="Suzuki H."/>
            <person name="Matsui S."/>
            <person name="Uchiyama I."/>
        </authorList>
    </citation>
    <scope>NUCLEOTIDE SEQUENCE [LARGE SCALE GENOMIC DNA]</scope>
    <source>
        <strain>HTA426</strain>
    </source>
</reference>
<feature type="chain" id="PRO_0000388487" description="Sulfite reductase [NADPH] hemoprotein beta-component">
    <location>
        <begin position="1"/>
        <end position="573"/>
    </location>
</feature>
<feature type="region of interest" description="Disordered" evidence="2">
    <location>
        <begin position="1"/>
        <end position="20"/>
    </location>
</feature>
<feature type="binding site" evidence="1">
    <location>
        <position position="438"/>
    </location>
    <ligand>
        <name>[4Fe-4S] cluster</name>
        <dbReference type="ChEBI" id="CHEBI:49883"/>
    </ligand>
</feature>
<feature type="binding site" evidence="1">
    <location>
        <position position="444"/>
    </location>
    <ligand>
        <name>[4Fe-4S] cluster</name>
        <dbReference type="ChEBI" id="CHEBI:49883"/>
    </ligand>
</feature>
<feature type="binding site" evidence="1">
    <location>
        <position position="483"/>
    </location>
    <ligand>
        <name>[4Fe-4S] cluster</name>
        <dbReference type="ChEBI" id="CHEBI:49883"/>
    </ligand>
</feature>
<feature type="binding site" evidence="1">
    <location>
        <position position="487"/>
    </location>
    <ligand>
        <name>[4Fe-4S] cluster</name>
        <dbReference type="ChEBI" id="CHEBI:49883"/>
    </ligand>
</feature>
<feature type="binding site" description="axial binding residue" evidence="1">
    <location>
        <position position="487"/>
    </location>
    <ligand>
        <name>siroheme</name>
        <dbReference type="ChEBI" id="CHEBI:60052"/>
    </ligand>
    <ligandPart>
        <name>Fe</name>
        <dbReference type="ChEBI" id="CHEBI:18248"/>
    </ligandPart>
</feature>
<organism>
    <name type="scientific">Geobacillus kaustophilus (strain HTA426)</name>
    <dbReference type="NCBI Taxonomy" id="235909"/>
    <lineage>
        <taxon>Bacteria</taxon>
        <taxon>Bacillati</taxon>
        <taxon>Bacillota</taxon>
        <taxon>Bacilli</taxon>
        <taxon>Bacillales</taxon>
        <taxon>Anoxybacillaceae</taxon>
        <taxon>Geobacillus</taxon>
        <taxon>Geobacillus thermoleovorans group</taxon>
    </lineage>
</organism>
<proteinExistence type="inferred from homology"/>
<comment type="function">
    <text evidence="1">Component of the sulfite reductase complex that catalyzes the 6-electron reduction of sulfite to sulfide. This is one of several activities required for the biosynthesis of L-cysteine from sulfate.</text>
</comment>
<comment type="catalytic activity">
    <reaction evidence="1">
        <text>hydrogen sulfide + 3 NADP(+) + 3 H2O = sulfite + 3 NADPH + 4 H(+)</text>
        <dbReference type="Rhea" id="RHEA:13801"/>
        <dbReference type="ChEBI" id="CHEBI:15377"/>
        <dbReference type="ChEBI" id="CHEBI:15378"/>
        <dbReference type="ChEBI" id="CHEBI:17359"/>
        <dbReference type="ChEBI" id="CHEBI:29919"/>
        <dbReference type="ChEBI" id="CHEBI:57783"/>
        <dbReference type="ChEBI" id="CHEBI:58349"/>
        <dbReference type="EC" id="1.8.1.2"/>
    </reaction>
</comment>
<comment type="cofactor">
    <cofactor evidence="1">
        <name>siroheme</name>
        <dbReference type="ChEBI" id="CHEBI:60052"/>
    </cofactor>
    <text evidence="1">Binds 1 siroheme per subunit.</text>
</comment>
<comment type="cofactor">
    <cofactor evidence="1">
        <name>[4Fe-4S] cluster</name>
        <dbReference type="ChEBI" id="CHEBI:49883"/>
    </cofactor>
    <text evidence="1">Binds 1 [4Fe-4S] cluster per subunit.</text>
</comment>
<comment type="pathway">
    <text evidence="1">Sulfur metabolism; hydrogen sulfide biosynthesis; hydrogen sulfide from sulfite (NADPH route): step 1/1.</text>
</comment>
<comment type="subunit">
    <text evidence="1">Alpha(8)-beta(8). The alpha component is a flavoprotein, the beta component is a hemoprotein.</text>
</comment>
<comment type="similarity">
    <text evidence="1">Belongs to the nitrite and sulfite reductase 4Fe-4S domain family.</text>
</comment>
<evidence type="ECO:0000255" key="1">
    <source>
        <dbReference type="HAMAP-Rule" id="MF_01540"/>
    </source>
</evidence>
<evidence type="ECO:0000256" key="2">
    <source>
        <dbReference type="SAM" id="MobiDB-lite"/>
    </source>
</evidence>